<proteinExistence type="predicted"/>
<keyword id="KW-0025">Alternative splicing</keyword>
<keyword id="KW-0505">Motor protein</keyword>
<keyword id="KW-0514">Muscle protein</keyword>
<keyword id="KW-0518">Myosin</keyword>
<keyword id="KW-0677">Repeat</keyword>
<dbReference type="EMBL" id="L08053">
    <property type="protein sequence ID" value="AAA28693.1"/>
    <property type="molecule type" value="Genomic_DNA"/>
</dbReference>
<dbReference type="EMBL" id="L08053">
    <property type="protein sequence ID" value="AAA28692.1"/>
    <property type="molecule type" value="Genomic_DNA"/>
</dbReference>
<dbReference type="RefSeq" id="XP_002055989.2">
    <molecule id="Q24756-1"/>
    <property type="nucleotide sequence ID" value="XM_002055953.4"/>
</dbReference>
<dbReference type="RefSeq" id="XP_015026000.1">
    <molecule id="Q24756-2"/>
    <property type="nucleotide sequence ID" value="XM_015170514.3"/>
</dbReference>
<dbReference type="SMR" id="Q24756"/>
<dbReference type="EnsemblMetazoa" id="FBtr0226613">
    <molecule id="Q24756-1"/>
    <property type="protein sequence ID" value="FBpp0225105"/>
    <property type="gene ID" value="FBgn0013088"/>
</dbReference>
<dbReference type="EnsemblMetazoa" id="FBtr0442873">
    <molecule id="Q24756-2"/>
    <property type="protein sequence ID" value="FBpp0399318"/>
    <property type="gene ID" value="FBgn0013088"/>
</dbReference>
<dbReference type="EnsemblMetazoa" id="XM_002055953.3">
    <molecule id="Q24756-1"/>
    <property type="protein sequence ID" value="XP_002055989.2"/>
    <property type="gene ID" value="LOC6632300"/>
</dbReference>
<dbReference type="EnsemblMetazoa" id="XM_015170514.2">
    <molecule id="Q24756-2"/>
    <property type="protein sequence ID" value="XP_015026000.1"/>
    <property type="gene ID" value="LOC6632300"/>
</dbReference>
<dbReference type="GeneID" id="6632300"/>
<dbReference type="KEGG" id="dvi:6632300"/>
<dbReference type="CTD" id="23209"/>
<dbReference type="eggNOG" id="KOG0030">
    <property type="taxonomic scope" value="Eukaryota"/>
</dbReference>
<dbReference type="OrthoDB" id="26525at2759"/>
<dbReference type="ChiTaRS" id="Mlc1">
    <property type="organism name" value="fly"/>
</dbReference>
<dbReference type="GO" id="GO:0005859">
    <property type="term" value="C:muscle myosin complex"/>
    <property type="evidence" value="ECO:0000250"/>
    <property type="project" value="UniProtKB"/>
</dbReference>
<dbReference type="GO" id="GO:0005509">
    <property type="term" value="F:calcium ion binding"/>
    <property type="evidence" value="ECO:0007669"/>
    <property type="project" value="InterPro"/>
</dbReference>
<dbReference type="GO" id="GO:0007498">
    <property type="term" value="P:mesoderm development"/>
    <property type="evidence" value="ECO:0007669"/>
    <property type="project" value="EnsemblMetazoa"/>
</dbReference>
<dbReference type="FunFam" id="1.10.238.10:FF:000286">
    <property type="entry name" value="Myosin alkali light chain 1"/>
    <property type="match status" value="1"/>
</dbReference>
<dbReference type="FunFam" id="1.10.238.10:FF:000267">
    <property type="entry name" value="Myosin light chain alkali"/>
    <property type="match status" value="1"/>
</dbReference>
<dbReference type="Gene3D" id="1.10.238.10">
    <property type="entry name" value="EF-hand"/>
    <property type="match status" value="2"/>
</dbReference>
<dbReference type="InterPro" id="IPR050230">
    <property type="entry name" value="CALM/Myosin/TropC-like"/>
</dbReference>
<dbReference type="InterPro" id="IPR011992">
    <property type="entry name" value="EF-hand-dom_pair"/>
</dbReference>
<dbReference type="InterPro" id="IPR002048">
    <property type="entry name" value="EF_hand_dom"/>
</dbReference>
<dbReference type="PANTHER" id="PTHR23048">
    <property type="entry name" value="MYOSIN LIGHT CHAIN 1, 3"/>
    <property type="match status" value="1"/>
</dbReference>
<dbReference type="PANTHER" id="PTHR23048:SF33">
    <property type="entry name" value="MYOSIN LIGHT CHAIN ALKALI"/>
    <property type="match status" value="1"/>
</dbReference>
<dbReference type="SUPFAM" id="SSF47473">
    <property type="entry name" value="EF-hand"/>
    <property type="match status" value="1"/>
</dbReference>
<dbReference type="PROSITE" id="PS50222">
    <property type="entry name" value="EF_HAND_2"/>
    <property type="match status" value="2"/>
</dbReference>
<reference key="1">
    <citation type="journal article" date="1993" name="Mol. Biol. Evol.">
        <title>Conservation of alternative splicing and genomic organization of the myosin alkali light-chain (Mlc1) gene among Drosophila species.</title>
        <authorList>
            <person name="Leicht B.G."/>
            <person name="Lyckegaard E.M.S."/>
            <person name="Benedict C.M."/>
            <person name="Clark A.G."/>
        </authorList>
    </citation>
    <scope>NUCLEOTIDE SEQUENCE [GENOMIC DNA]</scope>
    <scope>ALTERNATIVE SPLICING</scope>
    <source>
        <tissue>Flight muscle</tissue>
        <tissue>Head</tissue>
        <tissue>Larva</tissue>
    </source>
</reference>
<sequence length="155" mass="17617">MADVPKREVENVEFVFEVMGSPGEGIDAFDLGDALRALNLNPTLALIEKMGGTKKRNEKKIKLDEFLPIYSQVKKEKEQGCYEDFIECLKLYDKEENGTMLLAELQHALLALGESLDDEQVENLFADCMDPEDDEGFIPYSQFIQRLMSDPVVFD</sequence>
<protein>
    <recommendedName>
        <fullName>Myosin light chain alkali</fullName>
    </recommendedName>
</protein>
<feature type="chain" id="PRO_0000198715" description="Myosin light chain alkali">
    <location>
        <begin position="1"/>
        <end position="155"/>
    </location>
</feature>
<feature type="domain" description="EF-hand 1" evidence="1">
    <location>
        <begin position="7"/>
        <end position="41"/>
    </location>
</feature>
<feature type="domain" description="EF-hand 2" evidence="1">
    <location>
        <begin position="80"/>
        <end position="115"/>
    </location>
</feature>
<feature type="splice variant" id="VSP_003372" description="In isoform Indirect flight muscle." evidence="2">
    <original>QFIQRLMSDPVVFD</original>
    <variation>PFLARMCDRPDAL</variation>
    <location>
        <begin position="142"/>
        <end position="155"/>
    </location>
</feature>
<gene>
    <name type="primary">Mlc1</name>
</gene>
<organism>
    <name type="scientific">Drosophila virilis</name>
    <name type="common">Fruit fly</name>
    <dbReference type="NCBI Taxonomy" id="7244"/>
    <lineage>
        <taxon>Eukaryota</taxon>
        <taxon>Metazoa</taxon>
        <taxon>Ecdysozoa</taxon>
        <taxon>Arthropoda</taxon>
        <taxon>Hexapoda</taxon>
        <taxon>Insecta</taxon>
        <taxon>Pterygota</taxon>
        <taxon>Neoptera</taxon>
        <taxon>Endopterygota</taxon>
        <taxon>Diptera</taxon>
        <taxon>Brachycera</taxon>
        <taxon>Muscomorpha</taxon>
        <taxon>Ephydroidea</taxon>
        <taxon>Drosophilidae</taxon>
        <taxon>Drosophila</taxon>
    </lineage>
</organism>
<name>MLC1_DROVI</name>
<accession>Q24756</accession>
<accession>Q24755</accession>
<comment type="subunit">
    <text>Myosin is a hexamer of 2 heavy chains and 4 light chains.</text>
</comment>
<comment type="alternative products">
    <event type="alternative splicing"/>
    <isoform>
        <id>Q24756-1</id>
        <name>Larval-adult</name>
        <name>Larval-non-IFM</name>
        <sequence type="displayed"/>
    </isoform>
    <isoform>
        <id>Q24756-2</id>
        <name>Indirect flight muscle</name>
        <name>Pupa</name>
        <name>Adult flight muscle</name>
        <sequence type="described" ref="VSP_003372"/>
    </isoform>
</comment>
<evidence type="ECO:0000255" key="1">
    <source>
        <dbReference type="PROSITE-ProRule" id="PRU00448"/>
    </source>
</evidence>
<evidence type="ECO:0000305" key="2"/>